<reference key="1">
    <citation type="journal article" date="2010" name="Proc. Natl. Acad. Sci. U.S.A.">
        <title>Nitrosopumilus maritimus genome reveals unique mechanisms for nitrification and autotrophy in globally distributed marine crenarchaea.</title>
        <authorList>
            <person name="Walker C.B."/>
            <person name="de la Torre J.R."/>
            <person name="Klotz M.G."/>
            <person name="Urakawa H."/>
            <person name="Pinel N."/>
            <person name="Arp D.J."/>
            <person name="Brochier-Armanet C."/>
            <person name="Chain P.S."/>
            <person name="Chan P.P."/>
            <person name="Gollabgir A."/>
            <person name="Hemp J."/>
            <person name="Hugler M."/>
            <person name="Karr E.A."/>
            <person name="Konneke M."/>
            <person name="Shin M."/>
            <person name="Lawton T.J."/>
            <person name="Lowe T."/>
            <person name="Martens-Habbena W."/>
            <person name="Sayavedra-Soto L.A."/>
            <person name="Lang D."/>
            <person name="Sievert S.M."/>
            <person name="Rosenzweig A.C."/>
            <person name="Manning G."/>
            <person name="Stahl D.A."/>
        </authorList>
    </citation>
    <scope>NUCLEOTIDE SEQUENCE [LARGE SCALE GENOMIC DNA]</scope>
    <source>
        <strain>SCM1</strain>
    </source>
</reference>
<organism>
    <name type="scientific">Nitrosopumilus maritimus (strain SCM1)</name>
    <dbReference type="NCBI Taxonomy" id="436308"/>
    <lineage>
        <taxon>Archaea</taxon>
        <taxon>Nitrososphaerota</taxon>
        <taxon>Nitrososphaeria</taxon>
        <taxon>Nitrosopumilales</taxon>
        <taxon>Nitrosopumilaceae</taxon>
        <taxon>Nitrosopumilus</taxon>
    </lineage>
</organism>
<comment type="function">
    <text evidence="1">Protein S19 forms a complex with S13 that binds strongly to the 16S ribosomal RNA.</text>
</comment>
<comment type="similarity">
    <text evidence="1">Belongs to the universal ribosomal protein uS19 family.</text>
</comment>
<keyword id="KW-1185">Reference proteome</keyword>
<keyword id="KW-0687">Ribonucleoprotein</keyword>
<keyword id="KW-0689">Ribosomal protein</keyword>
<keyword id="KW-0694">RNA-binding</keyword>
<keyword id="KW-0699">rRNA-binding</keyword>
<proteinExistence type="inferred from homology"/>
<evidence type="ECO:0000255" key="1">
    <source>
        <dbReference type="HAMAP-Rule" id="MF_00531"/>
    </source>
</evidence>
<evidence type="ECO:0000305" key="2"/>
<protein>
    <recommendedName>
        <fullName evidence="1">Small ribosomal subunit protein uS19</fullName>
    </recommendedName>
    <alternativeName>
        <fullName evidence="2">30S ribosomal protein S19</fullName>
    </alternativeName>
</protein>
<accession>A9A5J1</accession>
<gene>
    <name evidence="1" type="primary">rps19</name>
    <name type="ordered locus">Nmar_0806</name>
</gene>
<feature type="chain" id="PRO_0000354322" description="Small ribosomal subunit protein uS19">
    <location>
        <begin position="1"/>
        <end position="131"/>
    </location>
</feature>
<name>RS19_NITMS</name>
<dbReference type="EMBL" id="CP000866">
    <property type="protein sequence ID" value="ABX12702.1"/>
    <property type="molecule type" value="Genomic_DNA"/>
</dbReference>
<dbReference type="RefSeq" id="WP_012215189.1">
    <property type="nucleotide sequence ID" value="NC_010085.1"/>
</dbReference>
<dbReference type="SMR" id="A9A5J1"/>
<dbReference type="FunCoup" id="A9A5J1">
    <property type="interactions" value="159"/>
</dbReference>
<dbReference type="STRING" id="436308.Nmar_0806"/>
<dbReference type="EnsemblBacteria" id="ABX12702">
    <property type="protein sequence ID" value="ABX12702"/>
    <property type="gene ID" value="Nmar_0806"/>
</dbReference>
<dbReference type="GeneID" id="5773840"/>
<dbReference type="KEGG" id="nmr:Nmar_0806"/>
<dbReference type="eggNOG" id="arCOG04099">
    <property type="taxonomic scope" value="Archaea"/>
</dbReference>
<dbReference type="HOGENOM" id="CLU_097347_1_0_2"/>
<dbReference type="InParanoid" id="A9A5J1"/>
<dbReference type="OrthoDB" id="30559at2157"/>
<dbReference type="PhylomeDB" id="A9A5J1"/>
<dbReference type="Proteomes" id="UP000000792">
    <property type="component" value="Chromosome"/>
</dbReference>
<dbReference type="GO" id="GO:0022627">
    <property type="term" value="C:cytosolic small ribosomal subunit"/>
    <property type="evidence" value="ECO:0000318"/>
    <property type="project" value="GO_Central"/>
</dbReference>
<dbReference type="GO" id="GO:0019843">
    <property type="term" value="F:rRNA binding"/>
    <property type="evidence" value="ECO:0007669"/>
    <property type="project" value="UniProtKB-UniRule"/>
</dbReference>
<dbReference type="GO" id="GO:0003735">
    <property type="term" value="F:structural constituent of ribosome"/>
    <property type="evidence" value="ECO:0000318"/>
    <property type="project" value="GO_Central"/>
</dbReference>
<dbReference type="GO" id="GO:0000028">
    <property type="term" value="P:ribosomal small subunit assembly"/>
    <property type="evidence" value="ECO:0000318"/>
    <property type="project" value="GO_Central"/>
</dbReference>
<dbReference type="GO" id="GO:0006412">
    <property type="term" value="P:translation"/>
    <property type="evidence" value="ECO:0007669"/>
    <property type="project" value="UniProtKB-UniRule"/>
</dbReference>
<dbReference type="FunFam" id="3.30.860.10:FF:000002">
    <property type="entry name" value="40S ribosomal protein S15"/>
    <property type="match status" value="1"/>
</dbReference>
<dbReference type="Gene3D" id="3.30.860.10">
    <property type="entry name" value="30s Ribosomal Protein S19, Chain A"/>
    <property type="match status" value="1"/>
</dbReference>
<dbReference type="HAMAP" id="MF_00531">
    <property type="entry name" value="Ribosomal_uS19"/>
    <property type="match status" value="1"/>
</dbReference>
<dbReference type="InterPro" id="IPR002222">
    <property type="entry name" value="Ribosomal_uS19"/>
</dbReference>
<dbReference type="InterPro" id="IPR020934">
    <property type="entry name" value="Ribosomal_uS19_CS"/>
</dbReference>
<dbReference type="InterPro" id="IPR005713">
    <property type="entry name" value="Ribosomal_uS19_euk/arc"/>
</dbReference>
<dbReference type="InterPro" id="IPR023575">
    <property type="entry name" value="Ribosomal_uS19_SF"/>
</dbReference>
<dbReference type="NCBIfam" id="NF003121">
    <property type="entry name" value="PRK04038.1"/>
    <property type="match status" value="1"/>
</dbReference>
<dbReference type="NCBIfam" id="TIGR01025">
    <property type="entry name" value="uS19_arch"/>
    <property type="match status" value="1"/>
</dbReference>
<dbReference type="PANTHER" id="PTHR11880">
    <property type="entry name" value="RIBOSOMAL PROTEIN S19P FAMILY MEMBER"/>
    <property type="match status" value="1"/>
</dbReference>
<dbReference type="PANTHER" id="PTHR11880:SF2">
    <property type="entry name" value="SMALL RIBOSOMAL SUBUNIT PROTEIN US19"/>
    <property type="match status" value="1"/>
</dbReference>
<dbReference type="Pfam" id="PF00203">
    <property type="entry name" value="Ribosomal_S19"/>
    <property type="match status" value="1"/>
</dbReference>
<dbReference type="PIRSF" id="PIRSF002144">
    <property type="entry name" value="Ribosomal_S19"/>
    <property type="match status" value="1"/>
</dbReference>
<dbReference type="PRINTS" id="PR00975">
    <property type="entry name" value="RIBOSOMALS19"/>
</dbReference>
<dbReference type="SUPFAM" id="SSF54570">
    <property type="entry name" value="Ribosomal protein S19"/>
    <property type="match status" value="1"/>
</dbReference>
<dbReference type="PROSITE" id="PS00323">
    <property type="entry name" value="RIBOSOMAL_S19"/>
    <property type="match status" value="1"/>
</dbReference>
<sequence>MVKEFAYRGIPKEELDNMSLEKLFQLFNARQRRSLTRGITDGKRKLIEEIKAAKAGKLKNPIKTHVRDLIILPYMVDVTVNVFSGKEFRPVTIRTEMIGHYLGEYVITNRKVSHGAPGVGASRSSLYVPLK</sequence>